<feature type="chain" id="PRO_0000415659" description="KRR1 small subunit processome component">
    <location>
        <begin position="1"/>
        <end position="316"/>
    </location>
</feature>
<feature type="domain" description="KH" evidence="2">
    <location>
        <begin position="122"/>
        <end position="192"/>
    </location>
</feature>
<feature type="region of interest" description="Disordered" evidence="3">
    <location>
        <begin position="279"/>
        <end position="316"/>
    </location>
</feature>
<feature type="compositionally biased region" description="Basic and acidic residues" evidence="3">
    <location>
        <begin position="279"/>
        <end position="304"/>
    </location>
</feature>
<comment type="function">
    <text evidence="1">Required for 40S ribosome biogenesis. Involved in nucleolar processing of pre-18S ribosomal RNA and ribosome assembly. Essential for vegetative growth (By similarity).</text>
</comment>
<comment type="subunit">
    <text evidence="1">Component of the ribosomal small subunit (SSU) processome composed of at least 40 protein subunits and snoRNA U3. Interacts with snoRNA U3. Interacts with MPP10, KRI1 and with ribosomal proteins RPS1A, RPS4A, RPS4B, RPS8A, RPS8B, RPS11A, RPS11B, RPS13, RPS24, RPS25, RPL4A, RPL7B, RPL8, RPL23, RPL25 and RPL28 (By similarity).</text>
</comment>
<comment type="subcellular location">
    <subcellularLocation>
        <location evidence="1">Nucleus</location>
        <location evidence="1">Nucleolus</location>
    </subcellularLocation>
</comment>
<comment type="similarity">
    <text evidence="2">Belongs to the KRR1 family.</text>
</comment>
<evidence type="ECO:0000250" key="1">
    <source>
        <dbReference type="UniProtKB" id="P25586"/>
    </source>
</evidence>
<evidence type="ECO:0000255" key="2"/>
<evidence type="ECO:0000256" key="3">
    <source>
        <dbReference type="SAM" id="MobiDB-lite"/>
    </source>
</evidence>
<evidence type="ECO:0000312" key="4">
    <source>
        <dbReference type="EMBL" id="EGA79798.1"/>
    </source>
</evidence>
<keyword id="KW-0539">Nucleus</keyword>
<keyword id="KW-0687">Ribonucleoprotein</keyword>
<keyword id="KW-0690">Ribosome biogenesis</keyword>
<keyword id="KW-0694">RNA-binding</keyword>
<keyword id="KW-0698">rRNA processing</keyword>
<organism>
    <name type="scientific">Saccharomyces cerevisiae (strain VIN 13)</name>
    <name type="common">Baker's yeast</name>
    <dbReference type="NCBI Taxonomy" id="764099"/>
    <lineage>
        <taxon>Eukaryota</taxon>
        <taxon>Fungi</taxon>
        <taxon>Dikarya</taxon>
        <taxon>Ascomycota</taxon>
        <taxon>Saccharomycotina</taxon>
        <taxon>Saccharomycetes</taxon>
        <taxon>Saccharomycetales</taxon>
        <taxon>Saccharomycetaceae</taxon>
        <taxon>Saccharomyces</taxon>
    </lineage>
</organism>
<sequence length="316" mass="37159">MVSTHNRDKPWDTDDIDKWKIEEFKEEDNASGQPFAEESSFMTLFPKYRESYLKTIWNDVTRALDKHNIACVLDLVEGSMTVKTTRKTYDPAIILKARDLIKLLARSVPFPQAVKILQDDMACDVIKIGNFVTNKERFVKRRQRLVGPNGNTLKALELLTKCYILVQGNTVSAMGPFKGLKEVRRVVEDCMKNIHPIYHIKELMIKRELAKRPELANEDWSRFLPMFKKRNVARKKPKKIRNVEKKVYTPFPPAQLPRKVDLEIESGEYFLSKREKQMKKLNEQKEKQMEREIERQEERAKDFIAPEEEAYKPNQN</sequence>
<name>KRR1_YEASV</name>
<reference evidence="4" key="1">
    <citation type="journal article" date="2011" name="PLoS Genet.">
        <title>Whole-genome comparison reveals novel genetic elements that characterize the genome of industrial strains of Saccharomyces cerevisiae.</title>
        <authorList>
            <person name="Borneman A.R."/>
            <person name="Desany B.A."/>
            <person name="Riches D."/>
            <person name="Affourtit J.P."/>
            <person name="Forgan A.H."/>
            <person name="Pretorius I.S."/>
            <person name="Egholm M."/>
            <person name="Chambers P.J."/>
        </authorList>
    </citation>
    <scope>NUCLEOTIDE SEQUENCE [LARGE SCALE GENOMIC DNA]</scope>
    <source>
        <strain evidence="4">VIN 13</strain>
    </source>
</reference>
<accession>E7LRT8</accession>
<protein>
    <recommendedName>
        <fullName evidence="1">KRR1 small subunit processome component</fullName>
    </recommendedName>
    <alternativeName>
        <fullName evidence="1">KRR-R motif-containing protein 1</fullName>
    </alternativeName>
    <alternativeName>
        <fullName evidence="1">Ribosomal RNA assembly protein KRR1</fullName>
    </alternativeName>
</protein>
<proteinExistence type="inferred from homology"/>
<gene>
    <name evidence="1" type="primary">KRR1</name>
    <name type="ORF">VIN13_0432</name>
</gene>
<dbReference type="EMBL" id="ADXC01000007">
    <property type="protein sequence ID" value="EGA79798.1"/>
    <property type="molecule type" value="Genomic_DNA"/>
</dbReference>
<dbReference type="SMR" id="E7LRT8"/>
<dbReference type="HOGENOM" id="CLU_040185_0_2_1"/>
<dbReference type="OMA" id="TPDIDKW"/>
<dbReference type="GO" id="GO:0005730">
    <property type="term" value="C:nucleolus"/>
    <property type="evidence" value="ECO:0007669"/>
    <property type="project" value="UniProtKB-SubCell"/>
</dbReference>
<dbReference type="GO" id="GO:0032040">
    <property type="term" value="C:small-subunit processome"/>
    <property type="evidence" value="ECO:0007669"/>
    <property type="project" value="TreeGrafter"/>
</dbReference>
<dbReference type="GO" id="GO:0003723">
    <property type="term" value="F:RNA binding"/>
    <property type="evidence" value="ECO:0007669"/>
    <property type="project" value="UniProtKB-KW"/>
</dbReference>
<dbReference type="GO" id="GO:0006364">
    <property type="term" value="P:rRNA processing"/>
    <property type="evidence" value="ECO:0007669"/>
    <property type="project" value="UniProtKB-KW"/>
</dbReference>
<dbReference type="CDD" id="cd22393">
    <property type="entry name" value="KH-I_KRR1_rpt1"/>
    <property type="match status" value="1"/>
</dbReference>
<dbReference type="CDD" id="cd22394">
    <property type="entry name" value="KH-I_KRR1_rpt2"/>
    <property type="match status" value="1"/>
</dbReference>
<dbReference type="FunFam" id="3.30.1370.10:FF:000011">
    <property type="entry name" value="KRR1 small subunit processome component"/>
    <property type="match status" value="1"/>
</dbReference>
<dbReference type="FunFam" id="3.30.1370.10:FF:000014">
    <property type="entry name" value="KRR1 small subunit processome component"/>
    <property type="match status" value="1"/>
</dbReference>
<dbReference type="Gene3D" id="3.30.1370.10">
    <property type="entry name" value="K Homology domain, type 1"/>
    <property type="match status" value="2"/>
</dbReference>
<dbReference type="InterPro" id="IPR004087">
    <property type="entry name" value="KH_dom"/>
</dbReference>
<dbReference type="InterPro" id="IPR036612">
    <property type="entry name" value="KH_dom_type_1_sf"/>
</dbReference>
<dbReference type="InterPro" id="IPR041174">
    <property type="entry name" value="KRR1-like_KH1"/>
</dbReference>
<dbReference type="InterPro" id="IPR048550">
    <property type="entry name" value="KRR1-like_KH1_euk"/>
</dbReference>
<dbReference type="InterPro" id="IPR048548">
    <property type="entry name" value="KRR1-like_KH2"/>
</dbReference>
<dbReference type="InterPro" id="IPR048549">
    <property type="entry name" value="KRR1-like_KH2_euk"/>
</dbReference>
<dbReference type="InterPro" id="IPR024166">
    <property type="entry name" value="rRNA_assembly_KRR1"/>
</dbReference>
<dbReference type="PANTHER" id="PTHR12581">
    <property type="entry name" value="HIV-1 REV BINDING PROTEIN 2, 3"/>
    <property type="match status" value="1"/>
</dbReference>
<dbReference type="PANTHER" id="PTHR12581:SF0">
    <property type="entry name" value="KRR1 SMALL SUBUNIT PROCESSOME COMPONENT HOMOLOG"/>
    <property type="match status" value="1"/>
</dbReference>
<dbReference type="Pfam" id="PF17903">
    <property type="entry name" value="KH_KRR1_1st"/>
    <property type="match status" value="1"/>
</dbReference>
<dbReference type="Pfam" id="PF21800">
    <property type="entry name" value="KH_KRR1_2nd"/>
    <property type="match status" value="1"/>
</dbReference>
<dbReference type="PIRSF" id="PIRSF006515">
    <property type="entry name" value="KRR1"/>
    <property type="match status" value="1"/>
</dbReference>
<dbReference type="SMART" id="SM00322">
    <property type="entry name" value="KH"/>
    <property type="match status" value="1"/>
</dbReference>
<dbReference type="SUPFAM" id="SSF54791">
    <property type="entry name" value="Eukaryotic type KH-domain (KH-domain type I)"/>
    <property type="match status" value="1"/>
</dbReference>